<proteinExistence type="inferred from homology"/>
<sequence length="198" mass="20860">MAKVLVLYYSMYGHIETMARAVAEGASKVDGAEVIVKRVPETMPPQLFEKAGGKTQTAPVATPQELADYDAIIFGTPTRFGNMSGQMRTFLDQTGGLWASGALYGKLASVFSSTGTGGGQEQTITSTWTTLAHHGMVIVPIGYAAQELFDVSQVRGGTPYGATTIAGGDGSRQPSQEELSIARYQGEYVAGLAVKLNG</sequence>
<evidence type="ECO:0000255" key="1">
    <source>
        <dbReference type="HAMAP-Rule" id="MF_01017"/>
    </source>
</evidence>
<keyword id="KW-0285">Flavoprotein</keyword>
<keyword id="KW-0288">FMN</keyword>
<keyword id="KW-0520">NAD</keyword>
<keyword id="KW-0521">NADP</keyword>
<keyword id="KW-0547">Nucleotide-binding</keyword>
<keyword id="KW-0560">Oxidoreductase</keyword>
<reference key="1">
    <citation type="journal article" date="2009" name="PLoS Genet.">
        <title>Organised genome dynamics in the Escherichia coli species results in highly diverse adaptive paths.</title>
        <authorList>
            <person name="Touchon M."/>
            <person name="Hoede C."/>
            <person name="Tenaillon O."/>
            <person name="Barbe V."/>
            <person name="Baeriswyl S."/>
            <person name="Bidet P."/>
            <person name="Bingen E."/>
            <person name="Bonacorsi S."/>
            <person name="Bouchier C."/>
            <person name="Bouvet O."/>
            <person name="Calteau A."/>
            <person name="Chiapello H."/>
            <person name="Clermont O."/>
            <person name="Cruveiller S."/>
            <person name="Danchin A."/>
            <person name="Diard M."/>
            <person name="Dossat C."/>
            <person name="Karoui M.E."/>
            <person name="Frapy E."/>
            <person name="Garry L."/>
            <person name="Ghigo J.M."/>
            <person name="Gilles A.M."/>
            <person name="Johnson J."/>
            <person name="Le Bouguenec C."/>
            <person name="Lescat M."/>
            <person name="Mangenot S."/>
            <person name="Martinez-Jehanne V."/>
            <person name="Matic I."/>
            <person name="Nassif X."/>
            <person name="Oztas S."/>
            <person name="Petit M.A."/>
            <person name="Pichon C."/>
            <person name="Rouy Z."/>
            <person name="Ruf C.S."/>
            <person name="Schneider D."/>
            <person name="Tourret J."/>
            <person name="Vacherie B."/>
            <person name="Vallenet D."/>
            <person name="Medigue C."/>
            <person name="Rocha E.P.C."/>
            <person name="Denamur E."/>
        </authorList>
    </citation>
    <scope>NUCLEOTIDE SEQUENCE [LARGE SCALE GENOMIC DNA]</scope>
    <source>
        <strain>ATCC 35469 / DSM 13698 / BCRC 15582 / CCUG 18766 / IAM 14443 / JCM 21226 / LMG 7866 / NBRC 102419 / NCTC 12128 / CDC 0568-73</strain>
    </source>
</reference>
<organism>
    <name type="scientific">Escherichia fergusonii (strain ATCC 35469 / DSM 13698 / CCUG 18766 / IAM 14443 / JCM 21226 / LMG 7866 / NBRC 102419 / NCTC 12128 / CDC 0568-73)</name>
    <dbReference type="NCBI Taxonomy" id="585054"/>
    <lineage>
        <taxon>Bacteria</taxon>
        <taxon>Pseudomonadati</taxon>
        <taxon>Pseudomonadota</taxon>
        <taxon>Gammaproteobacteria</taxon>
        <taxon>Enterobacterales</taxon>
        <taxon>Enterobacteriaceae</taxon>
        <taxon>Escherichia</taxon>
    </lineage>
</organism>
<protein>
    <recommendedName>
        <fullName evidence="1">NAD(P)H dehydrogenase (quinone)</fullName>
        <ecNumber evidence="1">1.6.5.2</ecNumber>
    </recommendedName>
    <alternativeName>
        <fullName>Flavoprotein WrbA</fullName>
    </alternativeName>
    <alternativeName>
        <fullName evidence="1">NAD(P)H:quinone oxidoreductase</fullName>
        <shortName evidence="1">NQO</shortName>
    </alternativeName>
</protein>
<gene>
    <name type="ordered locus">EFER_1155</name>
</gene>
<name>NQOR_ESCF3</name>
<dbReference type="EC" id="1.6.5.2" evidence="1"/>
<dbReference type="EMBL" id="CU928158">
    <property type="protein sequence ID" value="CAQ88683.1"/>
    <property type="molecule type" value="Genomic_DNA"/>
</dbReference>
<dbReference type="SMR" id="B7LP27"/>
<dbReference type="KEGG" id="efe:EFER_1155"/>
<dbReference type="HOGENOM" id="CLU_051402_0_2_6"/>
<dbReference type="OrthoDB" id="9801479at2"/>
<dbReference type="Proteomes" id="UP000000745">
    <property type="component" value="Chromosome"/>
</dbReference>
<dbReference type="GO" id="GO:0016020">
    <property type="term" value="C:membrane"/>
    <property type="evidence" value="ECO:0007669"/>
    <property type="project" value="TreeGrafter"/>
</dbReference>
<dbReference type="GO" id="GO:0050660">
    <property type="term" value="F:flavin adenine dinucleotide binding"/>
    <property type="evidence" value="ECO:0007669"/>
    <property type="project" value="UniProtKB-UniRule"/>
</dbReference>
<dbReference type="GO" id="GO:0010181">
    <property type="term" value="F:FMN binding"/>
    <property type="evidence" value="ECO:0007669"/>
    <property type="project" value="InterPro"/>
</dbReference>
<dbReference type="GO" id="GO:0051287">
    <property type="term" value="F:NAD binding"/>
    <property type="evidence" value="ECO:0007669"/>
    <property type="project" value="UniProtKB-UniRule"/>
</dbReference>
<dbReference type="GO" id="GO:0050136">
    <property type="term" value="F:NADH:ubiquinone reductase (non-electrogenic) activity"/>
    <property type="evidence" value="ECO:0007669"/>
    <property type="project" value="RHEA"/>
</dbReference>
<dbReference type="GO" id="GO:0050661">
    <property type="term" value="F:NADP binding"/>
    <property type="evidence" value="ECO:0007669"/>
    <property type="project" value="UniProtKB-UniRule"/>
</dbReference>
<dbReference type="GO" id="GO:0008753">
    <property type="term" value="F:NADPH dehydrogenase (quinone) activity"/>
    <property type="evidence" value="ECO:0007669"/>
    <property type="project" value="RHEA"/>
</dbReference>
<dbReference type="FunFam" id="3.40.50.360:FF:000004">
    <property type="entry name" value="NAD(P)H dehydrogenase (quinone)"/>
    <property type="match status" value="1"/>
</dbReference>
<dbReference type="Gene3D" id="3.40.50.360">
    <property type="match status" value="1"/>
</dbReference>
<dbReference type="HAMAP" id="MF_01017">
    <property type="entry name" value="NQOR"/>
    <property type="match status" value="1"/>
</dbReference>
<dbReference type="InterPro" id="IPR008254">
    <property type="entry name" value="Flavodoxin/NO_synth"/>
</dbReference>
<dbReference type="InterPro" id="IPR029039">
    <property type="entry name" value="Flavoprotein-like_sf"/>
</dbReference>
<dbReference type="InterPro" id="IPR010089">
    <property type="entry name" value="Flavoprotein_WrbA-like"/>
</dbReference>
<dbReference type="InterPro" id="IPR005025">
    <property type="entry name" value="FMN_Rdtase-like_dom"/>
</dbReference>
<dbReference type="InterPro" id="IPR037513">
    <property type="entry name" value="NQO"/>
</dbReference>
<dbReference type="NCBIfam" id="TIGR01755">
    <property type="entry name" value="flav_wrbA"/>
    <property type="match status" value="1"/>
</dbReference>
<dbReference type="NCBIfam" id="NF002999">
    <property type="entry name" value="PRK03767.1"/>
    <property type="match status" value="1"/>
</dbReference>
<dbReference type="PANTHER" id="PTHR30546">
    <property type="entry name" value="FLAVODOXIN-RELATED PROTEIN WRBA-RELATED"/>
    <property type="match status" value="1"/>
</dbReference>
<dbReference type="PANTHER" id="PTHR30546:SF23">
    <property type="entry name" value="FLAVOPROTEIN-LIKE PROTEIN YCP4-RELATED"/>
    <property type="match status" value="1"/>
</dbReference>
<dbReference type="Pfam" id="PF03358">
    <property type="entry name" value="FMN_red"/>
    <property type="match status" value="1"/>
</dbReference>
<dbReference type="SUPFAM" id="SSF52218">
    <property type="entry name" value="Flavoproteins"/>
    <property type="match status" value="1"/>
</dbReference>
<dbReference type="PROSITE" id="PS50902">
    <property type="entry name" value="FLAVODOXIN_LIKE"/>
    <property type="match status" value="1"/>
</dbReference>
<accession>B7LP27</accession>
<comment type="catalytic activity">
    <reaction evidence="1">
        <text>a quinone + NADH + H(+) = a quinol + NAD(+)</text>
        <dbReference type="Rhea" id="RHEA:46160"/>
        <dbReference type="ChEBI" id="CHEBI:15378"/>
        <dbReference type="ChEBI" id="CHEBI:24646"/>
        <dbReference type="ChEBI" id="CHEBI:57540"/>
        <dbReference type="ChEBI" id="CHEBI:57945"/>
        <dbReference type="ChEBI" id="CHEBI:132124"/>
        <dbReference type="EC" id="1.6.5.2"/>
    </reaction>
</comment>
<comment type="catalytic activity">
    <reaction evidence="1">
        <text>a quinone + NADPH + H(+) = a quinol + NADP(+)</text>
        <dbReference type="Rhea" id="RHEA:46164"/>
        <dbReference type="ChEBI" id="CHEBI:15378"/>
        <dbReference type="ChEBI" id="CHEBI:24646"/>
        <dbReference type="ChEBI" id="CHEBI:57783"/>
        <dbReference type="ChEBI" id="CHEBI:58349"/>
        <dbReference type="ChEBI" id="CHEBI:132124"/>
        <dbReference type="EC" id="1.6.5.2"/>
    </reaction>
</comment>
<comment type="cofactor">
    <cofactor evidence="1">
        <name>FMN</name>
        <dbReference type="ChEBI" id="CHEBI:58210"/>
    </cofactor>
    <text evidence="1">Binds 1 FMN per monomer.</text>
</comment>
<comment type="similarity">
    <text evidence="1">Belongs to the WrbA family.</text>
</comment>
<feature type="chain" id="PRO_1000200630" description="NAD(P)H dehydrogenase (quinone)">
    <location>
        <begin position="1"/>
        <end position="198"/>
    </location>
</feature>
<feature type="domain" description="Flavodoxin-like" evidence="1">
    <location>
        <begin position="4"/>
        <end position="189"/>
    </location>
</feature>
<feature type="binding site" evidence="1">
    <location>
        <begin position="10"/>
        <end position="15"/>
    </location>
    <ligand>
        <name>FMN</name>
        <dbReference type="ChEBI" id="CHEBI:58210"/>
    </ligand>
</feature>
<feature type="binding site" evidence="1">
    <location>
        <position position="12"/>
    </location>
    <ligand>
        <name>NAD(+)</name>
        <dbReference type="ChEBI" id="CHEBI:57540"/>
    </ligand>
</feature>
<feature type="binding site" evidence="1">
    <location>
        <begin position="78"/>
        <end position="80"/>
    </location>
    <ligand>
        <name>FMN</name>
        <dbReference type="ChEBI" id="CHEBI:58210"/>
    </ligand>
</feature>
<feature type="binding site" evidence="1">
    <location>
        <position position="98"/>
    </location>
    <ligand>
        <name>substrate</name>
    </ligand>
</feature>
<feature type="binding site" evidence="1">
    <location>
        <begin position="113"/>
        <end position="118"/>
    </location>
    <ligand>
        <name>FMN</name>
        <dbReference type="ChEBI" id="CHEBI:58210"/>
    </ligand>
</feature>
<feature type="binding site" evidence="1">
    <location>
        <position position="133"/>
    </location>
    <ligand>
        <name>FMN</name>
        <dbReference type="ChEBI" id="CHEBI:58210"/>
    </ligand>
</feature>